<keyword id="KW-1185">Reference proteome</keyword>
<reference key="1">
    <citation type="journal article" date="2004" name="Science">
        <title>The 1.2-megabase genome sequence of Mimivirus.</title>
        <authorList>
            <person name="Raoult D."/>
            <person name="Audic S."/>
            <person name="Robert C."/>
            <person name="Abergel C."/>
            <person name="Renesto P."/>
            <person name="Ogata H."/>
            <person name="La Scola B."/>
            <person name="Susan M."/>
            <person name="Claverie J.-M."/>
        </authorList>
    </citation>
    <scope>NUCLEOTIDE SEQUENCE [LARGE SCALE GENOMIC DNA]</scope>
    <source>
        <strain>Rowbotham-Bradford</strain>
    </source>
</reference>
<comment type="similarity">
    <text evidence="1">Belongs to the mimivirus L31/R44 family.</text>
</comment>
<feature type="chain" id="PRO_0000243959" description="Uncharacterized protein L31">
    <location>
        <begin position="1"/>
        <end position="225"/>
    </location>
</feature>
<protein>
    <recommendedName>
        <fullName>Uncharacterized protein L31</fullName>
    </recommendedName>
</protein>
<dbReference type="EMBL" id="AY653733">
    <property type="protein sequence ID" value="AAV50306.1"/>
    <property type="molecule type" value="Genomic_DNA"/>
</dbReference>
<dbReference type="SMR" id="Q5UPA6"/>
<dbReference type="KEGG" id="vg:9924609"/>
<dbReference type="OrthoDB" id="22867at10239"/>
<dbReference type="Proteomes" id="UP000001134">
    <property type="component" value="Genome"/>
</dbReference>
<dbReference type="InterPro" id="IPR043840">
    <property type="entry name" value="DUF5868"/>
</dbReference>
<dbReference type="Pfam" id="PF19186">
    <property type="entry name" value="DUF5868"/>
    <property type="match status" value="1"/>
</dbReference>
<name>YL031_MIMIV</name>
<gene>
    <name type="ordered locus">MIMI_L31</name>
</gene>
<proteinExistence type="inferred from homology"/>
<sequence>MKYIVGDYLYLGSKENEINNNFTWLMRYLYREFVLDYDKMKKIYGHIESDNNYDDIYNDNNFRDILYFEPNLMDDDKYIYKYENNINLDNDIDDIVFYEEIKNLILELQVYLSEKTTKRLRVMGITKLKLVNDFGINKYVGGIRDLDWKLHFWPEYTIVNDNYITLHELIIACFKIKSHKFETYHEYFMKFDEFHVFSCVKKKDGLNTMCKEIIAFVNFNHYSSL</sequence>
<accession>Q5UPA6</accession>
<organismHost>
    <name type="scientific">Acanthamoeba polyphaga</name>
    <name type="common">Amoeba</name>
    <dbReference type="NCBI Taxonomy" id="5757"/>
</organismHost>
<organism>
    <name type="scientific">Acanthamoeba polyphaga mimivirus</name>
    <name type="common">APMV</name>
    <dbReference type="NCBI Taxonomy" id="212035"/>
    <lineage>
        <taxon>Viruses</taxon>
        <taxon>Varidnaviria</taxon>
        <taxon>Bamfordvirae</taxon>
        <taxon>Nucleocytoviricota</taxon>
        <taxon>Megaviricetes</taxon>
        <taxon>Imitervirales</taxon>
        <taxon>Mimiviridae</taxon>
        <taxon>Megamimivirinae</taxon>
        <taxon>Mimivirus</taxon>
        <taxon>Mimivirus bradfordmassiliense</taxon>
    </lineage>
</organism>
<evidence type="ECO:0000305" key="1"/>